<gene>
    <name type="primary">MT-CYB</name>
    <name type="synonym">COB</name>
    <name type="synonym">CYTB</name>
    <name type="synonym">MTCYB</name>
</gene>
<geneLocation type="mitochondrion"/>
<organism>
    <name type="scientific">Trachops cirrhosus</name>
    <name type="common">Fringe-lipped bat</name>
    <dbReference type="NCBI Taxonomy" id="148073"/>
    <lineage>
        <taxon>Eukaryota</taxon>
        <taxon>Metazoa</taxon>
        <taxon>Chordata</taxon>
        <taxon>Craniata</taxon>
        <taxon>Vertebrata</taxon>
        <taxon>Euteleostomi</taxon>
        <taxon>Mammalia</taxon>
        <taxon>Eutheria</taxon>
        <taxon>Laurasiatheria</taxon>
        <taxon>Chiroptera</taxon>
        <taxon>Yangochiroptera</taxon>
        <taxon>Phyllostomidae</taxon>
        <taxon>Phyllostominae</taxon>
        <taxon>Trachops</taxon>
    </lineage>
</organism>
<accession>Q2Q1V7</accession>
<dbReference type="EMBL" id="DQ233669">
    <property type="protein sequence ID" value="ABB85326.1"/>
    <property type="molecule type" value="Genomic_DNA"/>
</dbReference>
<dbReference type="SMR" id="Q2Q1V7"/>
<dbReference type="GO" id="GO:0005743">
    <property type="term" value="C:mitochondrial inner membrane"/>
    <property type="evidence" value="ECO:0007669"/>
    <property type="project" value="UniProtKB-SubCell"/>
</dbReference>
<dbReference type="GO" id="GO:0045275">
    <property type="term" value="C:respiratory chain complex III"/>
    <property type="evidence" value="ECO:0007669"/>
    <property type="project" value="InterPro"/>
</dbReference>
<dbReference type="GO" id="GO:0046872">
    <property type="term" value="F:metal ion binding"/>
    <property type="evidence" value="ECO:0007669"/>
    <property type="project" value="UniProtKB-KW"/>
</dbReference>
<dbReference type="GO" id="GO:0008121">
    <property type="term" value="F:ubiquinol-cytochrome-c reductase activity"/>
    <property type="evidence" value="ECO:0007669"/>
    <property type="project" value="InterPro"/>
</dbReference>
<dbReference type="GO" id="GO:0006122">
    <property type="term" value="P:mitochondrial electron transport, ubiquinol to cytochrome c"/>
    <property type="evidence" value="ECO:0007669"/>
    <property type="project" value="TreeGrafter"/>
</dbReference>
<dbReference type="CDD" id="cd00290">
    <property type="entry name" value="cytochrome_b_C"/>
    <property type="match status" value="1"/>
</dbReference>
<dbReference type="CDD" id="cd00284">
    <property type="entry name" value="Cytochrome_b_N"/>
    <property type="match status" value="1"/>
</dbReference>
<dbReference type="FunFam" id="1.20.810.10:FF:000002">
    <property type="entry name" value="Cytochrome b"/>
    <property type="match status" value="1"/>
</dbReference>
<dbReference type="Gene3D" id="1.20.810.10">
    <property type="entry name" value="Cytochrome Bc1 Complex, Chain C"/>
    <property type="match status" value="1"/>
</dbReference>
<dbReference type="InterPro" id="IPR005798">
    <property type="entry name" value="Cyt_b/b6_C"/>
</dbReference>
<dbReference type="InterPro" id="IPR036150">
    <property type="entry name" value="Cyt_b/b6_C_sf"/>
</dbReference>
<dbReference type="InterPro" id="IPR005797">
    <property type="entry name" value="Cyt_b/b6_N"/>
</dbReference>
<dbReference type="InterPro" id="IPR027387">
    <property type="entry name" value="Cytb/b6-like_sf"/>
</dbReference>
<dbReference type="InterPro" id="IPR030689">
    <property type="entry name" value="Cytochrome_b"/>
</dbReference>
<dbReference type="InterPro" id="IPR048260">
    <property type="entry name" value="Cytochrome_b_C_euk/bac"/>
</dbReference>
<dbReference type="InterPro" id="IPR048259">
    <property type="entry name" value="Cytochrome_b_N_euk/bac"/>
</dbReference>
<dbReference type="InterPro" id="IPR016174">
    <property type="entry name" value="Di-haem_cyt_TM"/>
</dbReference>
<dbReference type="PANTHER" id="PTHR19271">
    <property type="entry name" value="CYTOCHROME B"/>
    <property type="match status" value="1"/>
</dbReference>
<dbReference type="PANTHER" id="PTHR19271:SF16">
    <property type="entry name" value="CYTOCHROME B"/>
    <property type="match status" value="1"/>
</dbReference>
<dbReference type="Pfam" id="PF00032">
    <property type="entry name" value="Cytochrom_B_C"/>
    <property type="match status" value="1"/>
</dbReference>
<dbReference type="Pfam" id="PF00033">
    <property type="entry name" value="Cytochrome_B"/>
    <property type="match status" value="1"/>
</dbReference>
<dbReference type="PIRSF" id="PIRSF038885">
    <property type="entry name" value="COB"/>
    <property type="match status" value="1"/>
</dbReference>
<dbReference type="SUPFAM" id="SSF81648">
    <property type="entry name" value="a domain/subunit of cytochrome bc1 complex (Ubiquinol-cytochrome c reductase)"/>
    <property type="match status" value="1"/>
</dbReference>
<dbReference type="SUPFAM" id="SSF81342">
    <property type="entry name" value="Transmembrane di-heme cytochromes"/>
    <property type="match status" value="1"/>
</dbReference>
<dbReference type="PROSITE" id="PS51003">
    <property type="entry name" value="CYTB_CTER"/>
    <property type="match status" value="1"/>
</dbReference>
<dbReference type="PROSITE" id="PS51002">
    <property type="entry name" value="CYTB_NTER"/>
    <property type="match status" value="1"/>
</dbReference>
<protein>
    <recommendedName>
        <fullName>Cytochrome b</fullName>
    </recommendedName>
    <alternativeName>
        <fullName>Complex III subunit 3</fullName>
    </alternativeName>
    <alternativeName>
        <fullName>Complex III subunit III</fullName>
    </alternativeName>
    <alternativeName>
        <fullName>Cytochrome b-c1 complex subunit 3</fullName>
    </alternativeName>
    <alternativeName>
        <fullName>Ubiquinol-cytochrome-c reductase complex cytochrome b subunit</fullName>
    </alternativeName>
</protein>
<feature type="chain" id="PRO_0000254870" description="Cytochrome b">
    <location>
        <begin position="1"/>
        <end position="379"/>
    </location>
</feature>
<feature type="transmembrane region" description="Helical" evidence="2">
    <location>
        <begin position="33"/>
        <end position="53"/>
    </location>
</feature>
<feature type="transmembrane region" description="Helical" evidence="2">
    <location>
        <begin position="77"/>
        <end position="98"/>
    </location>
</feature>
<feature type="transmembrane region" description="Helical" evidence="2">
    <location>
        <begin position="113"/>
        <end position="133"/>
    </location>
</feature>
<feature type="transmembrane region" description="Helical" evidence="2">
    <location>
        <begin position="178"/>
        <end position="198"/>
    </location>
</feature>
<feature type="transmembrane region" description="Helical" evidence="2">
    <location>
        <begin position="226"/>
        <end position="246"/>
    </location>
</feature>
<feature type="transmembrane region" description="Helical" evidence="2">
    <location>
        <begin position="288"/>
        <end position="308"/>
    </location>
</feature>
<feature type="transmembrane region" description="Helical" evidence="2">
    <location>
        <begin position="320"/>
        <end position="340"/>
    </location>
</feature>
<feature type="transmembrane region" description="Helical" evidence="2">
    <location>
        <begin position="347"/>
        <end position="367"/>
    </location>
</feature>
<feature type="binding site" description="axial binding residue" evidence="2">
    <location>
        <position position="83"/>
    </location>
    <ligand>
        <name>heme b</name>
        <dbReference type="ChEBI" id="CHEBI:60344"/>
        <label>b562</label>
    </ligand>
    <ligandPart>
        <name>Fe</name>
        <dbReference type="ChEBI" id="CHEBI:18248"/>
    </ligandPart>
</feature>
<feature type="binding site" description="axial binding residue" evidence="2">
    <location>
        <position position="97"/>
    </location>
    <ligand>
        <name>heme b</name>
        <dbReference type="ChEBI" id="CHEBI:60344"/>
        <label>b566</label>
    </ligand>
    <ligandPart>
        <name>Fe</name>
        <dbReference type="ChEBI" id="CHEBI:18248"/>
    </ligandPart>
</feature>
<feature type="binding site" description="axial binding residue" evidence="2">
    <location>
        <position position="182"/>
    </location>
    <ligand>
        <name>heme b</name>
        <dbReference type="ChEBI" id="CHEBI:60344"/>
        <label>b562</label>
    </ligand>
    <ligandPart>
        <name>Fe</name>
        <dbReference type="ChEBI" id="CHEBI:18248"/>
    </ligandPart>
</feature>
<feature type="binding site" description="axial binding residue" evidence="2">
    <location>
        <position position="196"/>
    </location>
    <ligand>
        <name>heme b</name>
        <dbReference type="ChEBI" id="CHEBI:60344"/>
        <label>b566</label>
    </ligand>
    <ligandPart>
        <name>Fe</name>
        <dbReference type="ChEBI" id="CHEBI:18248"/>
    </ligandPart>
</feature>
<feature type="binding site" evidence="2">
    <location>
        <position position="201"/>
    </location>
    <ligand>
        <name>a ubiquinone</name>
        <dbReference type="ChEBI" id="CHEBI:16389"/>
    </ligand>
</feature>
<reference key="1">
    <citation type="submission" date="2005-10" db="EMBL/GenBank/DDBJ databases">
        <title>Molecular evidence for unrecognized biodiversity in the bat genus Micronycteris (Phyllostomidae), with descriptions of two new subgenera.</title>
        <authorList>
            <person name="Porter C.A."/>
            <person name="Hoofer S.R."/>
            <person name="Cline C.A."/>
            <person name="Hoffmann F.G."/>
            <person name="Baker R.J."/>
        </authorList>
    </citation>
    <scope>NUCLEOTIDE SEQUENCE [GENOMIC DNA]</scope>
</reference>
<comment type="function">
    <text evidence="2">Component of the ubiquinol-cytochrome c reductase complex (complex III or cytochrome b-c1 complex) that is part of the mitochondrial respiratory chain. The b-c1 complex mediates electron transfer from ubiquinol to cytochrome c. Contributes to the generation of a proton gradient across the mitochondrial membrane that is then used for ATP synthesis.</text>
</comment>
<comment type="cofactor">
    <cofactor evidence="2">
        <name>heme b</name>
        <dbReference type="ChEBI" id="CHEBI:60344"/>
    </cofactor>
    <text evidence="2">Binds 2 heme b groups non-covalently.</text>
</comment>
<comment type="subunit">
    <text evidence="2">The cytochrome bc1 complex contains 11 subunits: 3 respiratory subunits (MT-CYB, CYC1 and UQCRFS1), 2 core proteins (UQCRC1 and UQCRC2) and 6 low-molecular weight proteins (UQCRH/QCR6, UQCRB/QCR7, UQCRQ/QCR8, UQCR10/QCR9, UQCR11/QCR10 and a cleavage product of UQCRFS1). This cytochrome bc1 complex then forms a dimer.</text>
</comment>
<comment type="subcellular location">
    <subcellularLocation>
        <location evidence="2">Mitochondrion inner membrane</location>
        <topology evidence="2">Multi-pass membrane protein</topology>
    </subcellularLocation>
</comment>
<comment type="miscellaneous">
    <text evidence="1">Heme 1 (or BL or b562) is low-potential and absorbs at about 562 nm, and heme 2 (or BH or b566) is high-potential and absorbs at about 566 nm.</text>
</comment>
<comment type="similarity">
    <text evidence="3 4">Belongs to the cytochrome b family.</text>
</comment>
<comment type="caution">
    <text evidence="2">The full-length protein contains only eight transmembrane helices, not nine as predicted by bioinformatics tools.</text>
</comment>
<evidence type="ECO:0000250" key="1"/>
<evidence type="ECO:0000250" key="2">
    <source>
        <dbReference type="UniProtKB" id="P00157"/>
    </source>
</evidence>
<evidence type="ECO:0000255" key="3">
    <source>
        <dbReference type="PROSITE-ProRule" id="PRU00967"/>
    </source>
</evidence>
<evidence type="ECO:0000255" key="4">
    <source>
        <dbReference type="PROSITE-ProRule" id="PRU00968"/>
    </source>
</evidence>
<proteinExistence type="inferred from homology"/>
<sequence length="379" mass="42927">MTNIRKTHPLLKIINSSFIDLPTPSNLSSWWNFGSLLGVCLAVQILTGLFLAMHYTSDTTTAFNSVAHICRDVNYGWMLRYLHANGASMFFICLYMHVGRGLYYGSYMYSETWNIGIILLFMVMATAFMGYVLPWGQMSFWGATVITNLLSAIPYIGTDLVQWIWGGFSVDKATLTRFFAFHFLFPFIVSALVMVHLLFLHETGSNNPTGIPSDSDMIPFHPYYTIKDILGMLIMLTALSALVLFFPDLLGDPDNYMPANPLNTPPHIKPEWYFLFAYAILRSIPNKLGGVLALVLSILVLAIIPMLHTSKQRSMMFRPLSQCLFWLLVSVLLTLTWIGGQPVEYPYVTIGQVASILYFLILLIFMPLVGMVENYLLKW</sequence>
<name>CYB_TRACI</name>
<keyword id="KW-0249">Electron transport</keyword>
<keyword id="KW-0349">Heme</keyword>
<keyword id="KW-0408">Iron</keyword>
<keyword id="KW-0472">Membrane</keyword>
<keyword id="KW-0479">Metal-binding</keyword>
<keyword id="KW-0496">Mitochondrion</keyword>
<keyword id="KW-0999">Mitochondrion inner membrane</keyword>
<keyword id="KW-0679">Respiratory chain</keyword>
<keyword id="KW-0812">Transmembrane</keyword>
<keyword id="KW-1133">Transmembrane helix</keyword>
<keyword id="KW-0813">Transport</keyword>
<keyword id="KW-0830">Ubiquinone</keyword>